<proteinExistence type="inferred from homology"/>
<reference key="1">
    <citation type="journal article" date="2008" name="Appl. Environ. Microbiol.">
        <title>The genome sequence of the metal-mobilizing, extremely thermoacidophilic archaeon Metallosphaera sedula provides insights into bioleaching-associated metabolism.</title>
        <authorList>
            <person name="Auernik K.S."/>
            <person name="Maezato Y."/>
            <person name="Blum P.H."/>
            <person name="Kelly R.M."/>
        </authorList>
    </citation>
    <scope>NUCLEOTIDE SEQUENCE [LARGE SCALE GENOMIC DNA]</scope>
    <source>
        <strain>ATCC 51363 / DSM 5348 / JCM 9185 / NBRC 15509 / TH2</strain>
    </source>
</reference>
<name>TFE_METS5</name>
<evidence type="ECO:0000255" key="1">
    <source>
        <dbReference type="HAMAP-Rule" id="MF_01909"/>
    </source>
</evidence>
<accession>A4YJ15</accession>
<organism>
    <name type="scientific">Metallosphaera sedula (strain ATCC 51363 / DSM 5348 / JCM 9185 / NBRC 15509 / TH2)</name>
    <dbReference type="NCBI Taxonomy" id="399549"/>
    <lineage>
        <taxon>Archaea</taxon>
        <taxon>Thermoproteota</taxon>
        <taxon>Thermoprotei</taxon>
        <taxon>Sulfolobales</taxon>
        <taxon>Sulfolobaceae</taxon>
        <taxon>Metallosphaera</taxon>
    </lineage>
</organism>
<sequence length="176" mass="20920">MTGNIDQLMKDMARDLLGEDVIDVLSFLLDNKTELTDEEMANKLNVKVNEVRKKLYALAEHGLVSYRRTRDKETGWYVYYWKANVDQINELLLSRKREILNKLKARLEYETNNEFYICPEDKTKYTFEEAFENEFKCPKCGVQLVYYDSAKMREFLERKIKEIEEEIARETKVGSS</sequence>
<comment type="function">
    <text evidence="1">Transcription factor that plays a role in the activation of archaeal genes transcribed by RNA polymerase. Facilitates transcription initiation by enhancing TATA-box recognition by TATA-box-binding protein (Tbp), and transcription factor B (Tfb) and RNA polymerase recruitment. Not absolutely required for transcription in vitro, but particularly important in cases where Tbp or Tfb function is not optimal. It dynamically alters the nucleic acid-binding properties of RNA polymerases by stabilizing the initiation complex and destabilizing elongation complexes. Seems to translocate with the RNA polymerase following initiation and acts by binding to the non template strand of the transcription bubble in elongation complexes.</text>
</comment>
<comment type="subunit">
    <text evidence="1">Monomer. Interaction with RNA polymerase subunits RpoF and RpoE is necessary for Tfe stimulatory transcription activity. Able to interact with Tbp and RNA polymerase in the absence of DNA promoter. Interacts both with the preinitiation and elongation complexes.</text>
</comment>
<comment type="domain">
    <text evidence="1">The winged helix domain is involved in binding to DNA in the preinitiation complex.</text>
</comment>
<comment type="similarity">
    <text evidence="1">Belongs to the TFE family.</text>
</comment>
<feature type="chain" id="PRO_0000326595" description="Transcription factor E">
    <location>
        <begin position="1"/>
        <end position="176"/>
    </location>
</feature>
<feature type="domain" description="HTH TFE/IIEalpha-type" evidence="1">
    <location>
        <begin position="5"/>
        <end position="89"/>
    </location>
</feature>
<gene>
    <name evidence="1" type="primary">tfe</name>
    <name type="ordered locus">Msed_2279</name>
</gene>
<keyword id="KW-0238">DNA-binding</keyword>
<keyword id="KW-1185">Reference proteome</keyword>
<keyword id="KW-0804">Transcription</keyword>
<keyword id="KW-0805">Transcription regulation</keyword>
<protein>
    <recommendedName>
        <fullName evidence="1">Transcription factor E</fullName>
        <shortName evidence="1">TFE</shortName>
    </recommendedName>
    <alternativeName>
        <fullName evidence="1">TFIIE subunit alpha homolog</fullName>
    </alternativeName>
    <alternativeName>
        <fullName evidence="1">Transcription initiation factor TFIIE</fullName>
    </alternativeName>
</protein>
<dbReference type="EMBL" id="CP000682">
    <property type="protein sequence ID" value="ABP96417.1"/>
    <property type="molecule type" value="Genomic_DNA"/>
</dbReference>
<dbReference type="SMR" id="A4YJ15"/>
<dbReference type="STRING" id="399549.Msed_2279"/>
<dbReference type="KEGG" id="mse:Msed_2279"/>
<dbReference type="eggNOG" id="arCOG04270">
    <property type="taxonomic scope" value="Archaea"/>
</dbReference>
<dbReference type="HOGENOM" id="CLU_100097_0_0_2"/>
<dbReference type="Proteomes" id="UP000000242">
    <property type="component" value="Chromosome"/>
</dbReference>
<dbReference type="GO" id="GO:0003677">
    <property type="term" value="F:DNA binding"/>
    <property type="evidence" value="ECO:0007669"/>
    <property type="project" value="UniProtKB-KW"/>
</dbReference>
<dbReference type="GO" id="GO:0006355">
    <property type="term" value="P:regulation of DNA-templated transcription"/>
    <property type="evidence" value="ECO:0007669"/>
    <property type="project" value="InterPro"/>
</dbReference>
<dbReference type="GO" id="GO:0006367">
    <property type="term" value="P:transcription initiation at RNA polymerase II promoter"/>
    <property type="evidence" value="ECO:0007669"/>
    <property type="project" value="InterPro"/>
</dbReference>
<dbReference type="Gene3D" id="1.10.10.10">
    <property type="entry name" value="Winged helix-like DNA-binding domain superfamily/Winged helix DNA-binding domain"/>
    <property type="match status" value="1"/>
</dbReference>
<dbReference type="HAMAP" id="MF_01909">
    <property type="entry name" value="TFE_arch"/>
    <property type="match status" value="1"/>
</dbReference>
<dbReference type="InterPro" id="IPR016481">
    <property type="entry name" value="TF_E_archaea"/>
</dbReference>
<dbReference type="InterPro" id="IPR039997">
    <property type="entry name" value="TFE"/>
</dbReference>
<dbReference type="InterPro" id="IPR017919">
    <property type="entry name" value="TFIIE/TFIIEa_HTH"/>
</dbReference>
<dbReference type="InterPro" id="IPR002853">
    <property type="entry name" value="TFIIE_asu"/>
</dbReference>
<dbReference type="InterPro" id="IPR024550">
    <property type="entry name" value="TFIIEa/SarR/Rpc3_HTH_dom"/>
</dbReference>
<dbReference type="InterPro" id="IPR036388">
    <property type="entry name" value="WH-like_DNA-bd_sf"/>
</dbReference>
<dbReference type="InterPro" id="IPR036390">
    <property type="entry name" value="WH_DNA-bd_sf"/>
</dbReference>
<dbReference type="NCBIfam" id="TIGR00373">
    <property type="entry name" value="transcription factor E"/>
    <property type="match status" value="1"/>
</dbReference>
<dbReference type="PANTHER" id="PTHR13097:SF7">
    <property type="entry name" value="GENERAL TRANSCRIPTION FACTOR IIE SUBUNIT 1"/>
    <property type="match status" value="1"/>
</dbReference>
<dbReference type="PANTHER" id="PTHR13097">
    <property type="entry name" value="TRANSCRIPTION INITIATION FACTOR IIE, ALPHA SUBUNIT"/>
    <property type="match status" value="1"/>
</dbReference>
<dbReference type="Pfam" id="PF02002">
    <property type="entry name" value="TFIIE_alpha"/>
    <property type="match status" value="1"/>
</dbReference>
<dbReference type="PIRSF" id="PIRSF006373">
    <property type="entry name" value="TF_E_archaea"/>
    <property type="match status" value="1"/>
</dbReference>
<dbReference type="SMART" id="SM00531">
    <property type="entry name" value="TFIIE"/>
    <property type="match status" value="1"/>
</dbReference>
<dbReference type="SUPFAM" id="SSF46785">
    <property type="entry name" value="Winged helix' DNA-binding domain"/>
    <property type="match status" value="1"/>
</dbReference>
<dbReference type="PROSITE" id="PS51344">
    <property type="entry name" value="HTH_TFE_IIE"/>
    <property type="match status" value="1"/>
</dbReference>